<evidence type="ECO:0000255" key="1">
    <source>
        <dbReference type="HAMAP-Rule" id="MF_00531"/>
    </source>
</evidence>
<evidence type="ECO:0000305" key="2"/>
<organism>
    <name type="scientific">Dinoroseobacter shibae (strain DSM 16493 / NCIMB 14021 / DFL 12)</name>
    <dbReference type="NCBI Taxonomy" id="398580"/>
    <lineage>
        <taxon>Bacteria</taxon>
        <taxon>Pseudomonadati</taxon>
        <taxon>Pseudomonadota</taxon>
        <taxon>Alphaproteobacteria</taxon>
        <taxon>Rhodobacterales</taxon>
        <taxon>Roseobacteraceae</taxon>
        <taxon>Dinoroseobacter</taxon>
    </lineage>
</organism>
<feature type="chain" id="PRO_1000081769" description="Small ribosomal subunit protein uS19">
    <location>
        <begin position="1"/>
        <end position="92"/>
    </location>
</feature>
<comment type="function">
    <text evidence="1">Protein S19 forms a complex with S13 that binds strongly to the 16S ribosomal RNA.</text>
</comment>
<comment type="similarity">
    <text evidence="1">Belongs to the universal ribosomal protein uS19 family.</text>
</comment>
<dbReference type="EMBL" id="CP000830">
    <property type="protein sequence ID" value="ABV92035.1"/>
    <property type="molecule type" value="Genomic_DNA"/>
</dbReference>
<dbReference type="RefSeq" id="WP_012176966.1">
    <property type="nucleotide sequence ID" value="NC_009952.1"/>
</dbReference>
<dbReference type="SMR" id="A8LM58"/>
<dbReference type="STRING" id="398580.Dshi_0286"/>
<dbReference type="KEGG" id="dsh:Dshi_0286"/>
<dbReference type="eggNOG" id="COG0185">
    <property type="taxonomic scope" value="Bacteria"/>
</dbReference>
<dbReference type="HOGENOM" id="CLU_144911_0_1_5"/>
<dbReference type="OrthoDB" id="9797833at2"/>
<dbReference type="Proteomes" id="UP000006833">
    <property type="component" value="Chromosome"/>
</dbReference>
<dbReference type="GO" id="GO:0005737">
    <property type="term" value="C:cytoplasm"/>
    <property type="evidence" value="ECO:0007669"/>
    <property type="project" value="UniProtKB-ARBA"/>
</dbReference>
<dbReference type="GO" id="GO:0015935">
    <property type="term" value="C:small ribosomal subunit"/>
    <property type="evidence" value="ECO:0007669"/>
    <property type="project" value="InterPro"/>
</dbReference>
<dbReference type="GO" id="GO:0019843">
    <property type="term" value="F:rRNA binding"/>
    <property type="evidence" value="ECO:0007669"/>
    <property type="project" value="UniProtKB-UniRule"/>
</dbReference>
<dbReference type="GO" id="GO:0003735">
    <property type="term" value="F:structural constituent of ribosome"/>
    <property type="evidence" value="ECO:0007669"/>
    <property type="project" value="InterPro"/>
</dbReference>
<dbReference type="GO" id="GO:0000028">
    <property type="term" value="P:ribosomal small subunit assembly"/>
    <property type="evidence" value="ECO:0007669"/>
    <property type="project" value="TreeGrafter"/>
</dbReference>
<dbReference type="GO" id="GO:0006412">
    <property type="term" value="P:translation"/>
    <property type="evidence" value="ECO:0007669"/>
    <property type="project" value="UniProtKB-UniRule"/>
</dbReference>
<dbReference type="FunFam" id="3.30.860.10:FF:000001">
    <property type="entry name" value="30S ribosomal protein S19"/>
    <property type="match status" value="1"/>
</dbReference>
<dbReference type="Gene3D" id="3.30.860.10">
    <property type="entry name" value="30s Ribosomal Protein S19, Chain A"/>
    <property type="match status" value="1"/>
</dbReference>
<dbReference type="HAMAP" id="MF_00531">
    <property type="entry name" value="Ribosomal_uS19"/>
    <property type="match status" value="1"/>
</dbReference>
<dbReference type="InterPro" id="IPR002222">
    <property type="entry name" value="Ribosomal_uS19"/>
</dbReference>
<dbReference type="InterPro" id="IPR005732">
    <property type="entry name" value="Ribosomal_uS19_bac-type"/>
</dbReference>
<dbReference type="InterPro" id="IPR020934">
    <property type="entry name" value="Ribosomal_uS19_CS"/>
</dbReference>
<dbReference type="InterPro" id="IPR023575">
    <property type="entry name" value="Ribosomal_uS19_SF"/>
</dbReference>
<dbReference type="NCBIfam" id="TIGR01050">
    <property type="entry name" value="rpsS_bact"/>
    <property type="match status" value="1"/>
</dbReference>
<dbReference type="PANTHER" id="PTHR11880">
    <property type="entry name" value="RIBOSOMAL PROTEIN S19P FAMILY MEMBER"/>
    <property type="match status" value="1"/>
</dbReference>
<dbReference type="PANTHER" id="PTHR11880:SF8">
    <property type="entry name" value="SMALL RIBOSOMAL SUBUNIT PROTEIN US19M"/>
    <property type="match status" value="1"/>
</dbReference>
<dbReference type="Pfam" id="PF00203">
    <property type="entry name" value="Ribosomal_S19"/>
    <property type="match status" value="1"/>
</dbReference>
<dbReference type="PIRSF" id="PIRSF002144">
    <property type="entry name" value="Ribosomal_S19"/>
    <property type="match status" value="1"/>
</dbReference>
<dbReference type="PRINTS" id="PR00975">
    <property type="entry name" value="RIBOSOMALS19"/>
</dbReference>
<dbReference type="SUPFAM" id="SSF54570">
    <property type="entry name" value="Ribosomal protein S19"/>
    <property type="match status" value="1"/>
</dbReference>
<dbReference type="PROSITE" id="PS00323">
    <property type="entry name" value="RIBOSOMAL_S19"/>
    <property type="match status" value="1"/>
</dbReference>
<proteinExistence type="inferred from homology"/>
<gene>
    <name evidence="1" type="primary">rpsS</name>
    <name type="ordered locus">Dshi_0286</name>
</gene>
<reference key="1">
    <citation type="journal article" date="2010" name="ISME J.">
        <title>The complete genome sequence of the algal symbiont Dinoroseobacter shibae: a hitchhiker's guide to life in the sea.</title>
        <authorList>
            <person name="Wagner-Dobler I."/>
            <person name="Ballhausen B."/>
            <person name="Berger M."/>
            <person name="Brinkhoff T."/>
            <person name="Buchholz I."/>
            <person name="Bunk B."/>
            <person name="Cypionka H."/>
            <person name="Daniel R."/>
            <person name="Drepper T."/>
            <person name="Gerdts G."/>
            <person name="Hahnke S."/>
            <person name="Han C."/>
            <person name="Jahn D."/>
            <person name="Kalhoefer D."/>
            <person name="Kiss H."/>
            <person name="Klenk H.P."/>
            <person name="Kyrpides N."/>
            <person name="Liebl W."/>
            <person name="Liesegang H."/>
            <person name="Meincke L."/>
            <person name="Pati A."/>
            <person name="Petersen J."/>
            <person name="Piekarski T."/>
            <person name="Pommerenke C."/>
            <person name="Pradella S."/>
            <person name="Pukall R."/>
            <person name="Rabus R."/>
            <person name="Stackebrandt E."/>
            <person name="Thole S."/>
            <person name="Thompson L."/>
            <person name="Tielen P."/>
            <person name="Tomasch J."/>
            <person name="von Jan M."/>
            <person name="Wanphrut N."/>
            <person name="Wichels A."/>
            <person name="Zech H."/>
            <person name="Simon M."/>
        </authorList>
    </citation>
    <scope>NUCLEOTIDE SEQUENCE [LARGE SCALE GENOMIC DNA]</scope>
    <source>
        <strain>DSM 16493 / NCIMB 14021 / DFL 12</strain>
    </source>
</reference>
<keyword id="KW-1185">Reference proteome</keyword>
<keyword id="KW-0687">Ribonucleoprotein</keyword>
<keyword id="KW-0689">Ribosomal protein</keyword>
<keyword id="KW-0694">RNA-binding</keyword>
<keyword id="KW-0699">rRNA-binding</keyword>
<sequence>MTRSVWKGPFVDAYVLKKAEKTRESGRNEVIKIWSRRSTILPQFVGLTFGVYNGRKHIPVNVTEDMIGQKFGEYSPTRTYYGHAADKKAKRK</sequence>
<protein>
    <recommendedName>
        <fullName evidence="1">Small ribosomal subunit protein uS19</fullName>
    </recommendedName>
    <alternativeName>
        <fullName evidence="2">30S ribosomal protein S19</fullName>
    </alternativeName>
</protein>
<name>RS19_DINSH</name>
<accession>A8LM58</accession>